<name>DEOC_LACLS</name>
<evidence type="ECO:0000255" key="1">
    <source>
        <dbReference type="HAMAP-Rule" id="MF_00114"/>
    </source>
</evidence>
<reference key="1">
    <citation type="journal article" date="2006" name="Proc. Natl. Acad. Sci. U.S.A.">
        <title>Comparative genomics of the lactic acid bacteria.</title>
        <authorList>
            <person name="Makarova K.S."/>
            <person name="Slesarev A."/>
            <person name="Wolf Y.I."/>
            <person name="Sorokin A."/>
            <person name="Mirkin B."/>
            <person name="Koonin E.V."/>
            <person name="Pavlov A."/>
            <person name="Pavlova N."/>
            <person name="Karamychev V."/>
            <person name="Polouchine N."/>
            <person name="Shakhova V."/>
            <person name="Grigoriev I."/>
            <person name="Lou Y."/>
            <person name="Rohksar D."/>
            <person name="Lucas S."/>
            <person name="Huang K."/>
            <person name="Goodstein D.M."/>
            <person name="Hawkins T."/>
            <person name="Plengvidhya V."/>
            <person name="Welker D."/>
            <person name="Hughes J."/>
            <person name="Goh Y."/>
            <person name="Benson A."/>
            <person name="Baldwin K."/>
            <person name="Lee J.-H."/>
            <person name="Diaz-Muniz I."/>
            <person name="Dosti B."/>
            <person name="Smeianov V."/>
            <person name="Wechter W."/>
            <person name="Barabote R."/>
            <person name="Lorca G."/>
            <person name="Altermann E."/>
            <person name="Barrangou R."/>
            <person name="Ganesan B."/>
            <person name="Xie Y."/>
            <person name="Rawsthorne H."/>
            <person name="Tamir D."/>
            <person name="Parker C."/>
            <person name="Breidt F."/>
            <person name="Broadbent J.R."/>
            <person name="Hutkins R."/>
            <person name="O'Sullivan D."/>
            <person name="Steele J."/>
            <person name="Unlu G."/>
            <person name="Saier M.H. Jr."/>
            <person name="Klaenhammer T."/>
            <person name="Richardson P."/>
            <person name="Kozyavkin S."/>
            <person name="Weimer B.C."/>
            <person name="Mills D.A."/>
        </authorList>
    </citation>
    <scope>NUCLEOTIDE SEQUENCE [LARGE SCALE GENOMIC DNA]</scope>
    <source>
        <strain>SK11</strain>
    </source>
</reference>
<accession>Q02YD6</accession>
<gene>
    <name evidence="1" type="primary">deoC</name>
    <name type="ordered locus">LACR_1529</name>
</gene>
<comment type="function">
    <text evidence="1">Catalyzes a reversible aldol reaction between acetaldehyde and D-glyceraldehyde 3-phosphate to generate 2-deoxy-D-ribose 5-phosphate.</text>
</comment>
<comment type="catalytic activity">
    <reaction evidence="1">
        <text>2-deoxy-D-ribose 5-phosphate = D-glyceraldehyde 3-phosphate + acetaldehyde</text>
        <dbReference type="Rhea" id="RHEA:12821"/>
        <dbReference type="ChEBI" id="CHEBI:15343"/>
        <dbReference type="ChEBI" id="CHEBI:59776"/>
        <dbReference type="ChEBI" id="CHEBI:62877"/>
        <dbReference type="EC" id="4.1.2.4"/>
    </reaction>
</comment>
<comment type="pathway">
    <text evidence="1">Carbohydrate degradation; 2-deoxy-D-ribose 1-phosphate degradation; D-glyceraldehyde 3-phosphate and acetaldehyde from 2-deoxy-alpha-D-ribose 1-phosphate: step 2/2.</text>
</comment>
<comment type="subcellular location">
    <subcellularLocation>
        <location evidence="1">Cytoplasm</location>
    </subcellularLocation>
</comment>
<comment type="similarity">
    <text evidence="1">Belongs to the DeoC/FbaB aldolase family. DeoC type 1 subfamily.</text>
</comment>
<dbReference type="EC" id="4.1.2.4" evidence="1"/>
<dbReference type="EMBL" id="CP000425">
    <property type="protein sequence ID" value="ABJ73036.1"/>
    <property type="molecule type" value="Genomic_DNA"/>
</dbReference>
<dbReference type="RefSeq" id="WP_011676396.1">
    <property type="nucleotide sequence ID" value="NC_008527.1"/>
</dbReference>
<dbReference type="SMR" id="Q02YD6"/>
<dbReference type="KEGG" id="llc:LACR_1529"/>
<dbReference type="HOGENOM" id="CLU_053595_0_1_9"/>
<dbReference type="UniPathway" id="UPA00002">
    <property type="reaction ID" value="UER00468"/>
</dbReference>
<dbReference type="Proteomes" id="UP000000240">
    <property type="component" value="Chromosome"/>
</dbReference>
<dbReference type="GO" id="GO:0005737">
    <property type="term" value="C:cytoplasm"/>
    <property type="evidence" value="ECO:0007669"/>
    <property type="project" value="UniProtKB-SubCell"/>
</dbReference>
<dbReference type="GO" id="GO:0004139">
    <property type="term" value="F:deoxyribose-phosphate aldolase activity"/>
    <property type="evidence" value="ECO:0007669"/>
    <property type="project" value="UniProtKB-UniRule"/>
</dbReference>
<dbReference type="GO" id="GO:0006018">
    <property type="term" value="P:2-deoxyribose 1-phosphate catabolic process"/>
    <property type="evidence" value="ECO:0007669"/>
    <property type="project" value="UniProtKB-UniRule"/>
</dbReference>
<dbReference type="GO" id="GO:0016052">
    <property type="term" value="P:carbohydrate catabolic process"/>
    <property type="evidence" value="ECO:0007669"/>
    <property type="project" value="TreeGrafter"/>
</dbReference>
<dbReference type="GO" id="GO:0009264">
    <property type="term" value="P:deoxyribonucleotide catabolic process"/>
    <property type="evidence" value="ECO:0007669"/>
    <property type="project" value="InterPro"/>
</dbReference>
<dbReference type="CDD" id="cd00959">
    <property type="entry name" value="DeoC"/>
    <property type="match status" value="1"/>
</dbReference>
<dbReference type="FunFam" id="3.20.20.70:FF:000044">
    <property type="entry name" value="Deoxyribose-phosphate aldolase"/>
    <property type="match status" value="1"/>
</dbReference>
<dbReference type="Gene3D" id="3.20.20.70">
    <property type="entry name" value="Aldolase class I"/>
    <property type="match status" value="1"/>
</dbReference>
<dbReference type="HAMAP" id="MF_00114">
    <property type="entry name" value="DeoC_type1"/>
    <property type="match status" value="1"/>
</dbReference>
<dbReference type="InterPro" id="IPR013785">
    <property type="entry name" value="Aldolase_TIM"/>
</dbReference>
<dbReference type="InterPro" id="IPR011343">
    <property type="entry name" value="DeoC"/>
</dbReference>
<dbReference type="InterPro" id="IPR002915">
    <property type="entry name" value="DeoC/FbaB/LacD_aldolase"/>
</dbReference>
<dbReference type="InterPro" id="IPR028581">
    <property type="entry name" value="DeoC_typeI"/>
</dbReference>
<dbReference type="NCBIfam" id="TIGR00126">
    <property type="entry name" value="deoC"/>
    <property type="match status" value="1"/>
</dbReference>
<dbReference type="PANTHER" id="PTHR10889">
    <property type="entry name" value="DEOXYRIBOSE-PHOSPHATE ALDOLASE"/>
    <property type="match status" value="1"/>
</dbReference>
<dbReference type="PANTHER" id="PTHR10889:SF1">
    <property type="entry name" value="DEOXYRIBOSE-PHOSPHATE ALDOLASE"/>
    <property type="match status" value="1"/>
</dbReference>
<dbReference type="Pfam" id="PF01791">
    <property type="entry name" value="DeoC"/>
    <property type="match status" value="1"/>
</dbReference>
<dbReference type="PIRSF" id="PIRSF001357">
    <property type="entry name" value="DeoC"/>
    <property type="match status" value="1"/>
</dbReference>
<dbReference type="SMART" id="SM01133">
    <property type="entry name" value="DeoC"/>
    <property type="match status" value="1"/>
</dbReference>
<dbReference type="SUPFAM" id="SSF51569">
    <property type="entry name" value="Aldolase"/>
    <property type="match status" value="1"/>
</dbReference>
<feature type="chain" id="PRO_1000015322" description="Deoxyribose-phosphate aldolase">
    <location>
        <begin position="1"/>
        <end position="220"/>
    </location>
</feature>
<feature type="active site" description="Proton donor/acceptor" evidence="1">
    <location>
        <position position="89"/>
    </location>
</feature>
<feature type="active site" description="Schiff-base intermediate with acetaldehyde" evidence="1">
    <location>
        <position position="151"/>
    </location>
</feature>
<feature type="active site" description="Proton donor/acceptor" evidence="1">
    <location>
        <position position="180"/>
    </location>
</feature>
<sequence>MQINKYIDHTILKADAPKSKVQQIIDEAKKYDFMSVCINPTWVNYASQELKDSDVKVCTVIGFPLGANTSELKAFEAKNAIENGADEIDMVINIGAAKSKDWDLVESDIADVNAVKGDKLLKVIIETSLLTDEEKIKACQIAKAVGADFVKTSTGFSTGGAAVHDVKLMRQTVGPDMGVKASGGVHNLEEAKAMIDAGATRLGVSAGVAIMEGLTSNDSY</sequence>
<proteinExistence type="inferred from homology"/>
<protein>
    <recommendedName>
        <fullName evidence="1">Deoxyribose-phosphate aldolase</fullName>
        <shortName evidence="1">DERA</shortName>
        <ecNumber evidence="1">4.1.2.4</ecNumber>
    </recommendedName>
    <alternativeName>
        <fullName evidence="1">2-deoxy-D-ribose 5-phosphate aldolase</fullName>
    </alternativeName>
    <alternativeName>
        <fullName evidence="1">Phosphodeoxyriboaldolase</fullName>
        <shortName evidence="1">Deoxyriboaldolase</shortName>
    </alternativeName>
</protein>
<keyword id="KW-0963">Cytoplasm</keyword>
<keyword id="KW-0456">Lyase</keyword>
<keyword id="KW-0704">Schiff base</keyword>
<organism>
    <name type="scientific">Lactococcus lactis subsp. cremoris (strain SK11)</name>
    <dbReference type="NCBI Taxonomy" id="272622"/>
    <lineage>
        <taxon>Bacteria</taxon>
        <taxon>Bacillati</taxon>
        <taxon>Bacillota</taxon>
        <taxon>Bacilli</taxon>
        <taxon>Lactobacillales</taxon>
        <taxon>Streptococcaceae</taxon>
        <taxon>Lactococcus</taxon>
        <taxon>Lactococcus cremoris subsp. cremoris</taxon>
    </lineage>
</organism>